<evidence type="ECO:0000255" key="1">
    <source>
        <dbReference type="HAMAP-Rule" id="MF_00375"/>
    </source>
</evidence>
<organism>
    <name type="scientific">Burkholderia mallei (strain ATCC 23344)</name>
    <dbReference type="NCBI Taxonomy" id="243160"/>
    <lineage>
        <taxon>Bacteria</taxon>
        <taxon>Pseudomonadati</taxon>
        <taxon>Pseudomonadota</taxon>
        <taxon>Betaproteobacteria</taxon>
        <taxon>Burkholderiales</taxon>
        <taxon>Burkholderiaceae</taxon>
        <taxon>Burkholderia</taxon>
        <taxon>pseudomallei group</taxon>
    </lineage>
</organism>
<feature type="chain" id="PRO_0000243554" description="Glutamate-1-semialdehyde 2,1-aminomutase">
    <location>
        <begin position="1"/>
        <end position="427"/>
    </location>
</feature>
<feature type="modified residue" description="N6-(pyridoxal phosphate)lysine" evidence="1">
    <location>
        <position position="265"/>
    </location>
</feature>
<dbReference type="EC" id="5.4.3.8" evidence="1"/>
<dbReference type="EMBL" id="CP000010">
    <property type="protein sequence ID" value="AAU49956.1"/>
    <property type="molecule type" value="Genomic_DNA"/>
</dbReference>
<dbReference type="RefSeq" id="WP_004527562.1">
    <property type="nucleotide sequence ID" value="NC_006348.1"/>
</dbReference>
<dbReference type="RefSeq" id="YP_103712.1">
    <property type="nucleotide sequence ID" value="NC_006348.1"/>
</dbReference>
<dbReference type="SMR" id="Q62HV8"/>
<dbReference type="KEGG" id="bma:BMA2142"/>
<dbReference type="PATRIC" id="fig|243160.12.peg.2211"/>
<dbReference type="eggNOG" id="COG0001">
    <property type="taxonomic scope" value="Bacteria"/>
</dbReference>
<dbReference type="HOGENOM" id="CLU_016922_1_5_4"/>
<dbReference type="UniPathway" id="UPA00251">
    <property type="reaction ID" value="UER00317"/>
</dbReference>
<dbReference type="Proteomes" id="UP000006693">
    <property type="component" value="Chromosome 1"/>
</dbReference>
<dbReference type="GO" id="GO:0005737">
    <property type="term" value="C:cytoplasm"/>
    <property type="evidence" value="ECO:0007669"/>
    <property type="project" value="UniProtKB-SubCell"/>
</dbReference>
<dbReference type="GO" id="GO:0042286">
    <property type="term" value="F:glutamate-1-semialdehyde 2,1-aminomutase activity"/>
    <property type="evidence" value="ECO:0007669"/>
    <property type="project" value="UniProtKB-UniRule"/>
</dbReference>
<dbReference type="GO" id="GO:0030170">
    <property type="term" value="F:pyridoxal phosphate binding"/>
    <property type="evidence" value="ECO:0007669"/>
    <property type="project" value="InterPro"/>
</dbReference>
<dbReference type="GO" id="GO:0008483">
    <property type="term" value="F:transaminase activity"/>
    <property type="evidence" value="ECO:0007669"/>
    <property type="project" value="InterPro"/>
</dbReference>
<dbReference type="GO" id="GO:0006782">
    <property type="term" value="P:protoporphyrinogen IX biosynthetic process"/>
    <property type="evidence" value="ECO:0007669"/>
    <property type="project" value="UniProtKB-UniRule"/>
</dbReference>
<dbReference type="CDD" id="cd00610">
    <property type="entry name" value="OAT_like"/>
    <property type="match status" value="1"/>
</dbReference>
<dbReference type="FunFam" id="3.40.640.10:FF:000021">
    <property type="entry name" value="Glutamate-1-semialdehyde 2,1-aminomutase"/>
    <property type="match status" value="1"/>
</dbReference>
<dbReference type="Gene3D" id="3.90.1150.10">
    <property type="entry name" value="Aspartate Aminotransferase, domain 1"/>
    <property type="match status" value="1"/>
</dbReference>
<dbReference type="Gene3D" id="3.40.640.10">
    <property type="entry name" value="Type I PLP-dependent aspartate aminotransferase-like (Major domain)"/>
    <property type="match status" value="1"/>
</dbReference>
<dbReference type="HAMAP" id="MF_00375">
    <property type="entry name" value="HemL_aminotrans_3"/>
    <property type="match status" value="1"/>
</dbReference>
<dbReference type="InterPro" id="IPR004639">
    <property type="entry name" value="4pyrrol_synth_GluAld_NH2Trfase"/>
</dbReference>
<dbReference type="InterPro" id="IPR005814">
    <property type="entry name" value="Aminotrans_3"/>
</dbReference>
<dbReference type="InterPro" id="IPR049704">
    <property type="entry name" value="Aminotrans_3_PPA_site"/>
</dbReference>
<dbReference type="InterPro" id="IPR015424">
    <property type="entry name" value="PyrdxlP-dep_Trfase"/>
</dbReference>
<dbReference type="InterPro" id="IPR015421">
    <property type="entry name" value="PyrdxlP-dep_Trfase_major"/>
</dbReference>
<dbReference type="InterPro" id="IPR015422">
    <property type="entry name" value="PyrdxlP-dep_Trfase_small"/>
</dbReference>
<dbReference type="NCBIfam" id="TIGR00713">
    <property type="entry name" value="hemL"/>
    <property type="match status" value="1"/>
</dbReference>
<dbReference type="NCBIfam" id="NF000818">
    <property type="entry name" value="PRK00062.1"/>
    <property type="match status" value="1"/>
</dbReference>
<dbReference type="PANTHER" id="PTHR43713">
    <property type="entry name" value="GLUTAMATE-1-SEMIALDEHYDE 2,1-AMINOMUTASE"/>
    <property type="match status" value="1"/>
</dbReference>
<dbReference type="PANTHER" id="PTHR43713:SF3">
    <property type="entry name" value="GLUTAMATE-1-SEMIALDEHYDE 2,1-AMINOMUTASE 1, CHLOROPLASTIC-RELATED"/>
    <property type="match status" value="1"/>
</dbReference>
<dbReference type="Pfam" id="PF00202">
    <property type="entry name" value="Aminotran_3"/>
    <property type="match status" value="1"/>
</dbReference>
<dbReference type="SUPFAM" id="SSF53383">
    <property type="entry name" value="PLP-dependent transferases"/>
    <property type="match status" value="1"/>
</dbReference>
<dbReference type="PROSITE" id="PS00600">
    <property type="entry name" value="AA_TRANSFER_CLASS_3"/>
    <property type="match status" value="1"/>
</dbReference>
<comment type="catalytic activity">
    <reaction evidence="1">
        <text>(S)-4-amino-5-oxopentanoate = 5-aminolevulinate</text>
        <dbReference type="Rhea" id="RHEA:14265"/>
        <dbReference type="ChEBI" id="CHEBI:57501"/>
        <dbReference type="ChEBI" id="CHEBI:356416"/>
        <dbReference type="EC" id="5.4.3.8"/>
    </reaction>
</comment>
<comment type="cofactor">
    <cofactor evidence="1">
        <name>pyridoxal 5'-phosphate</name>
        <dbReference type="ChEBI" id="CHEBI:597326"/>
    </cofactor>
</comment>
<comment type="pathway">
    <text evidence="1">Porphyrin-containing compound metabolism; protoporphyrin-IX biosynthesis; 5-aminolevulinate from L-glutamyl-tRNA(Glu): step 2/2.</text>
</comment>
<comment type="subunit">
    <text evidence="1">Homodimer.</text>
</comment>
<comment type="subcellular location">
    <subcellularLocation>
        <location evidence="1">Cytoplasm</location>
    </subcellularLocation>
</comment>
<comment type="similarity">
    <text evidence="1">Belongs to the class-III pyridoxal-phosphate-dependent aminotransferase family. HemL subfamily.</text>
</comment>
<protein>
    <recommendedName>
        <fullName evidence="1">Glutamate-1-semialdehyde 2,1-aminomutase</fullName>
        <shortName evidence="1">GSA</shortName>
        <ecNumber evidence="1">5.4.3.8</ecNumber>
    </recommendedName>
    <alternativeName>
        <fullName evidence="1">Glutamate-1-semialdehyde aminotransferase</fullName>
        <shortName evidence="1">GSA-AT</shortName>
    </alternativeName>
</protein>
<reference key="1">
    <citation type="journal article" date="2004" name="Proc. Natl. Acad. Sci. U.S.A.">
        <title>Structural flexibility in the Burkholderia mallei genome.</title>
        <authorList>
            <person name="Nierman W.C."/>
            <person name="DeShazer D."/>
            <person name="Kim H.S."/>
            <person name="Tettelin H."/>
            <person name="Nelson K.E."/>
            <person name="Feldblyum T.V."/>
            <person name="Ulrich R.L."/>
            <person name="Ronning C.M."/>
            <person name="Brinkac L.M."/>
            <person name="Daugherty S.C."/>
            <person name="Davidsen T.D."/>
            <person name="DeBoy R.T."/>
            <person name="Dimitrov G."/>
            <person name="Dodson R.J."/>
            <person name="Durkin A.S."/>
            <person name="Gwinn M.L."/>
            <person name="Haft D.H."/>
            <person name="Khouri H.M."/>
            <person name="Kolonay J.F."/>
            <person name="Madupu R."/>
            <person name="Mohammoud Y."/>
            <person name="Nelson W.C."/>
            <person name="Radune D."/>
            <person name="Romero C.M."/>
            <person name="Sarria S."/>
            <person name="Selengut J."/>
            <person name="Shamblin C."/>
            <person name="Sullivan S.A."/>
            <person name="White O."/>
            <person name="Yu Y."/>
            <person name="Zafar N."/>
            <person name="Zhou L."/>
            <person name="Fraser C.M."/>
        </authorList>
    </citation>
    <scope>NUCLEOTIDE SEQUENCE [LARGE SCALE GENOMIC DNA]</scope>
    <source>
        <strain>ATCC 23344</strain>
    </source>
</reference>
<gene>
    <name evidence="1" type="primary">hemL</name>
    <name type="ordered locus">BMA2142</name>
</gene>
<accession>Q62HV8</accession>
<name>GSA_BURMA</name>
<keyword id="KW-0963">Cytoplasm</keyword>
<keyword id="KW-0413">Isomerase</keyword>
<keyword id="KW-0627">Porphyrin biosynthesis</keyword>
<keyword id="KW-0663">Pyridoxal phosphate</keyword>
<keyword id="KW-1185">Reference proteome</keyword>
<sequence length="427" mass="44798">MSNNQTLFERAQRTIPGGVNSPVRAFRSVGGTPRFVARAQGAYFWDADGKRYIDYIGSWGPMIVGHVHPDVLAAVQRVLADGFSFGAPTEAEIEIAEEICKLVPSIEQVRMVSSGTEATMSALRLARGFTGRSRIVKFEGCYHGHADSLLVKAGSGLLTFGNPTSAGVPADVAKHTTVLEYNNVAALEEAFAAFGGEIAAVIVEPVAGNMNLVRGTPEFLNALRALTAKHGAVLIFDEVMCGFRVALGGAQQHYGITPDLTCLGKVIGGGMPAAAFGGRGDIMSHLAPLGGVYQAGTLSGNPVAVAAGLATLRLIQAPGFHDALADKTRRLADGLAAEARAAGVPFSADAIGGMFGLYFTEQVPASFADVTKSDIERFNRFFHLMLDAGVYFAPSAYEAGFVSSAHDDATLDATLDAARRAFAALRA</sequence>
<proteinExistence type="inferred from homology"/>